<dbReference type="EC" id="2.8.1.13" evidence="1"/>
<dbReference type="EMBL" id="CP000884">
    <property type="protein sequence ID" value="ABX33450.1"/>
    <property type="molecule type" value="Genomic_DNA"/>
</dbReference>
<dbReference type="RefSeq" id="WP_012202736.1">
    <property type="nucleotide sequence ID" value="NC_010002.1"/>
</dbReference>
<dbReference type="SMR" id="A9BS40"/>
<dbReference type="STRING" id="398578.Daci_0804"/>
<dbReference type="GeneID" id="24119194"/>
<dbReference type="KEGG" id="dac:Daci_0804"/>
<dbReference type="eggNOG" id="COG0482">
    <property type="taxonomic scope" value="Bacteria"/>
</dbReference>
<dbReference type="HOGENOM" id="CLU_035188_1_0_4"/>
<dbReference type="Proteomes" id="UP000000784">
    <property type="component" value="Chromosome"/>
</dbReference>
<dbReference type="GO" id="GO:0005737">
    <property type="term" value="C:cytoplasm"/>
    <property type="evidence" value="ECO:0007669"/>
    <property type="project" value="UniProtKB-SubCell"/>
</dbReference>
<dbReference type="GO" id="GO:0005524">
    <property type="term" value="F:ATP binding"/>
    <property type="evidence" value="ECO:0007669"/>
    <property type="project" value="UniProtKB-KW"/>
</dbReference>
<dbReference type="GO" id="GO:0000049">
    <property type="term" value="F:tRNA binding"/>
    <property type="evidence" value="ECO:0007669"/>
    <property type="project" value="UniProtKB-KW"/>
</dbReference>
<dbReference type="GO" id="GO:0103016">
    <property type="term" value="F:tRNA-uridine 2-sulfurtransferase activity"/>
    <property type="evidence" value="ECO:0007669"/>
    <property type="project" value="UniProtKB-EC"/>
</dbReference>
<dbReference type="GO" id="GO:0002143">
    <property type="term" value="P:tRNA wobble position uridine thiolation"/>
    <property type="evidence" value="ECO:0007669"/>
    <property type="project" value="TreeGrafter"/>
</dbReference>
<dbReference type="CDD" id="cd01998">
    <property type="entry name" value="MnmA_TRMU-like"/>
    <property type="match status" value="1"/>
</dbReference>
<dbReference type="FunFam" id="2.30.30.280:FF:000001">
    <property type="entry name" value="tRNA-specific 2-thiouridylase MnmA"/>
    <property type="match status" value="1"/>
</dbReference>
<dbReference type="FunFam" id="2.40.30.10:FF:000023">
    <property type="entry name" value="tRNA-specific 2-thiouridylase MnmA"/>
    <property type="match status" value="1"/>
</dbReference>
<dbReference type="FunFam" id="3.40.50.620:FF:000004">
    <property type="entry name" value="tRNA-specific 2-thiouridylase MnmA"/>
    <property type="match status" value="1"/>
</dbReference>
<dbReference type="Gene3D" id="2.30.30.280">
    <property type="entry name" value="Adenine nucleotide alpha hydrolases-like domains"/>
    <property type="match status" value="1"/>
</dbReference>
<dbReference type="Gene3D" id="3.40.50.620">
    <property type="entry name" value="HUPs"/>
    <property type="match status" value="1"/>
</dbReference>
<dbReference type="Gene3D" id="2.40.30.10">
    <property type="entry name" value="Translation factors"/>
    <property type="match status" value="1"/>
</dbReference>
<dbReference type="HAMAP" id="MF_00144">
    <property type="entry name" value="tRNA_thiouridyl_MnmA"/>
    <property type="match status" value="1"/>
</dbReference>
<dbReference type="InterPro" id="IPR004506">
    <property type="entry name" value="MnmA-like"/>
</dbReference>
<dbReference type="InterPro" id="IPR046885">
    <property type="entry name" value="MnmA-like_C"/>
</dbReference>
<dbReference type="InterPro" id="IPR046884">
    <property type="entry name" value="MnmA-like_central"/>
</dbReference>
<dbReference type="InterPro" id="IPR023382">
    <property type="entry name" value="MnmA-like_central_sf"/>
</dbReference>
<dbReference type="InterPro" id="IPR014729">
    <property type="entry name" value="Rossmann-like_a/b/a_fold"/>
</dbReference>
<dbReference type="NCBIfam" id="NF001138">
    <property type="entry name" value="PRK00143.1"/>
    <property type="match status" value="1"/>
</dbReference>
<dbReference type="NCBIfam" id="TIGR00420">
    <property type="entry name" value="trmU"/>
    <property type="match status" value="1"/>
</dbReference>
<dbReference type="PANTHER" id="PTHR11933:SF5">
    <property type="entry name" value="MITOCHONDRIAL TRNA-SPECIFIC 2-THIOURIDYLASE 1"/>
    <property type="match status" value="1"/>
</dbReference>
<dbReference type="PANTHER" id="PTHR11933">
    <property type="entry name" value="TRNA 5-METHYLAMINOMETHYL-2-THIOURIDYLATE -METHYLTRANSFERASE"/>
    <property type="match status" value="1"/>
</dbReference>
<dbReference type="Pfam" id="PF03054">
    <property type="entry name" value="tRNA_Me_trans"/>
    <property type="match status" value="1"/>
</dbReference>
<dbReference type="Pfam" id="PF20258">
    <property type="entry name" value="tRNA_Me_trans_C"/>
    <property type="match status" value="1"/>
</dbReference>
<dbReference type="Pfam" id="PF20259">
    <property type="entry name" value="tRNA_Me_trans_M"/>
    <property type="match status" value="1"/>
</dbReference>
<dbReference type="SUPFAM" id="SSF52402">
    <property type="entry name" value="Adenine nucleotide alpha hydrolases-like"/>
    <property type="match status" value="1"/>
</dbReference>
<gene>
    <name evidence="1" type="primary">mnmA</name>
    <name type="ordered locus">Daci_0804</name>
</gene>
<reference key="1">
    <citation type="submission" date="2007-11" db="EMBL/GenBank/DDBJ databases">
        <title>Complete sequence of Delftia acidovorans DSM 14801 / SPH-1.</title>
        <authorList>
            <person name="Copeland A."/>
            <person name="Lucas S."/>
            <person name="Lapidus A."/>
            <person name="Barry K."/>
            <person name="Glavina del Rio T."/>
            <person name="Dalin E."/>
            <person name="Tice H."/>
            <person name="Pitluck S."/>
            <person name="Lowry S."/>
            <person name="Clum A."/>
            <person name="Schmutz J."/>
            <person name="Larimer F."/>
            <person name="Land M."/>
            <person name="Hauser L."/>
            <person name="Kyrpides N."/>
            <person name="Kim E."/>
            <person name="Schleheck D."/>
            <person name="Richardson P."/>
        </authorList>
    </citation>
    <scope>NUCLEOTIDE SEQUENCE [LARGE SCALE GENOMIC DNA]</scope>
    <source>
        <strain>DSM 14801 / SPH-1</strain>
    </source>
</reference>
<organism>
    <name type="scientific">Delftia acidovorans (strain DSM 14801 / SPH-1)</name>
    <dbReference type="NCBI Taxonomy" id="398578"/>
    <lineage>
        <taxon>Bacteria</taxon>
        <taxon>Pseudomonadati</taxon>
        <taxon>Pseudomonadota</taxon>
        <taxon>Betaproteobacteria</taxon>
        <taxon>Burkholderiales</taxon>
        <taxon>Comamonadaceae</taxon>
        <taxon>Delftia</taxon>
    </lineage>
</organism>
<comment type="function">
    <text evidence="1">Catalyzes the 2-thiolation of uridine at the wobble position (U34) of tRNA, leading to the formation of s(2)U34.</text>
</comment>
<comment type="catalytic activity">
    <reaction evidence="1">
        <text>S-sulfanyl-L-cysteinyl-[protein] + uridine(34) in tRNA + AH2 + ATP = 2-thiouridine(34) in tRNA + L-cysteinyl-[protein] + A + AMP + diphosphate + H(+)</text>
        <dbReference type="Rhea" id="RHEA:47032"/>
        <dbReference type="Rhea" id="RHEA-COMP:10131"/>
        <dbReference type="Rhea" id="RHEA-COMP:11726"/>
        <dbReference type="Rhea" id="RHEA-COMP:11727"/>
        <dbReference type="Rhea" id="RHEA-COMP:11728"/>
        <dbReference type="ChEBI" id="CHEBI:13193"/>
        <dbReference type="ChEBI" id="CHEBI:15378"/>
        <dbReference type="ChEBI" id="CHEBI:17499"/>
        <dbReference type="ChEBI" id="CHEBI:29950"/>
        <dbReference type="ChEBI" id="CHEBI:30616"/>
        <dbReference type="ChEBI" id="CHEBI:33019"/>
        <dbReference type="ChEBI" id="CHEBI:61963"/>
        <dbReference type="ChEBI" id="CHEBI:65315"/>
        <dbReference type="ChEBI" id="CHEBI:87170"/>
        <dbReference type="ChEBI" id="CHEBI:456215"/>
        <dbReference type="EC" id="2.8.1.13"/>
    </reaction>
</comment>
<comment type="subcellular location">
    <subcellularLocation>
        <location evidence="1">Cytoplasm</location>
    </subcellularLocation>
</comment>
<comment type="similarity">
    <text evidence="1">Belongs to the MnmA/TRMU family.</text>
</comment>
<accession>A9BS40</accession>
<evidence type="ECO:0000255" key="1">
    <source>
        <dbReference type="HAMAP-Rule" id="MF_00144"/>
    </source>
</evidence>
<feature type="chain" id="PRO_0000349610" description="tRNA-specific 2-thiouridylase MnmA">
    <location>
        <begin position="1"/>
        <end position="372"/>
    </location>
</feature>
<feature type="region of interest" description="Interaction with target base in tRNA" evidence="1">
    <location>
        <begin position="95"/>
        <end position="97"/>
    </location>
</feature>
<feature type="region of interest" description="Interaction with tRNA" evidence="1">
    <location>
        <begin position="148"/>
        <end position="150"/>
    </location>
</feature>
<feature type="region of interest" description="Interaction with tRNA" evidence="1">
    <location>
        <begin position="317"/>
        <end position="318"/>
    </location>
</feature>
<feature type="active site" description="Nucleophile" evidence="1">
    <location>
        <position position="100"/>
    </location>
</feature>
<feature type="active site" description="Cysteine persulfide intermediate" evidence="1">
    <location>
        <position position="198"/>
    </location>
</feature>
<feature type="binding site" evidence="1">
    <location>
        <begin position="9"/>
        <end position="16"/>
    </location>
    <ligand>
        <name>ATP</name>
        <dbReference type="ChEBI" id="CHEBI:30616"/>
    </ligand>
</feature>
<feature type="binding site" evidence="1">
    <location>
        <position position="35"/>
    </location>
    <ligand>
        <name>ATP</name>
        <dbReference type="ChEBI" id="CHEBI:30616"/>
    </ligand>
</feature>
<feature type="binding site" evidence="1">
    <location>
        <position position="124"/>
    </location>
    <ligand>
        <name>ATP</name>
        <dbReference type="ChEBI" id="CHEBI:30616"/>
    </ligand>
</feature>
<feature type="site" description="Interaction with tRNA" evidence="1">
    <location>
        <position position="125"/>
    </location>
</feature>
<feature type="site" description="Interaction with tRNA" evidence="1">
    <location>
        <position position="350"/>
    </location>
</feature>
<feature type="disulfide bond" description="Alternate" evidence="1">
    <location>
        <begin position="100"/>
        <end position="198"/>
    </location>
</feature>
<name>MNMA_DELAS</name>
<keyword id="KW-0067">ATP-binding</keyword>
<keyword id="KW-0963">Cytoplasm</keyword>
<keyword id="KW-1015">Disulfide bond</keyword>
<keyword id="KW-0547">Nucleotide-binding</keyword>
<keyword id="KW-1185">Reference proteome</keyword>
<keyword id="KW-0694">RNA-binding</keyword>
<keyword id="KW-0808">Transferase</keyword>
<keyword id="KW-0819">tRNA processing</keyword>
<keyword id="KW-0820">tRNA-binding</keyword>
<proteinExistence type="inferred from homology"/>
<sequence length="372" mass="41049">MTKHRVVVGLSGGVDSAVTAHLLKQQGHEVVGIFMKNWEDDDDSEYCSSNVDFVDAAAVADVVGIEIEHVNFASEYKDRVFAEFLREYQAGRTPNPDVLCNAEIKFKAFLDHAMRLGAEKIATGHYARVRQNPDTQLFELLKGLDPAKDQSYFLHRLNQAQLSRSMFPVGELKKTEVRRIAEEIGLPNAKKKDSTGICFIGERPFRDFLNRYISKEPGNILDDRNRKLGKHVGLSFYTLGQRSGLGIGGVKEKGAPRGGGDHDPWFVARKELDTNTLRVVQGHDHPWLLSQSLLADQVSWVAGHAPAEGKAYGSKTRYRQPDSPALISGATPEGFRLDFPEPQWAVTPGQSAVLYDGDVCLGGGIIAAVDPH</sequence>
<protein>
    <recommendedName>
        <fullName evidence="1">tRNA-specific 2-thiouridylase MnmA</fullName>
        <ecNumber evidence="1">2.8.1.13</ecNumber>
    </recommendedName>
</protein>